<protein>
    <recommendedName>
        <fullName>Vacuolar cation/proton exchanger 5</fullName>
    </recommendedName>
    <alternativeName>
        <fullName>Ca(2+)/H(+) antiporter CAX5</fullName>
    </alternativeName>
    <alternativeName>
        <fullName>Ca(2+)/H(+) exchanger 5</fullName>
    </alternativeName>
    <alternativeName>
        <fullName>Protein CATION EXCHANGER 5</fullName>
    </alternativeName>
</protein>
<sequence length="441" mass="48096">MGCCKVPALIQAQVEMGLVNDVEHKSLFRRDTDSPERKAASLMEQGSLSASFRECSTKTPNNSVLQSFKIVILSNKLNLLLPFGPLAILLHYLTDNKGWIFLLSLVGITPLAERLGYATEQLACYTGSTVGGLLNATFGNVTELIISIFALKSGMIRVVQLTLLGSILSNMLLVLGCAFFCGGLVFSQKEQVFDKGNAVVNSGLLLMAVMGLLFPAVLHYTHSEVHAGSSELALSRFSSCIMLVAYAAYLFFQLKSQPSSYTPLTEETNQNEETSDDDEDPEISKWEAIIWLSILTAWVSLLSGYLVDAIEGASVSWKIPISFISVILLPIVGNAAEHAGAIMFAMKDKLDLSLGVAIGSSIQISMFAVPFCVVIGWMMGAQMDLNFQLFETATLFITVIVVAFFLQEGTSNYFKGLMLILCYLIVAASFFVHEDPHQDDI</sequence>
<evidence type="ECO:0000250" key="1"/>
<evidence type="ECO:0000255" key="2"/>
<evidence type="ECO:0000305" key="3"/>
<feature type="initiator methionine" description="Removed" evidence="2">
    <location>
        <position position="1"/>
    </location>
</feature>
<feature type="chain" id="PRO_0000270154" description="Vacuolar cation/proton exchanger 5">
    <location>
        <begin position="2"/>
        <end position="441"/>
    </location>
</feature>
<feature type="topological domain" description="Cytoplasmic" evidence="2">
    <location>
        <begin position="2"/>
        <end position="69"/>
    </location>
</feature>
<feature type="transmembrane region" description="Helical" evidence="2">
    <location>
        <begin position="70"/>
        <end position="90"/>
    </location>
</feature>
<feature type="topological domain" description="Extracellular" evidence="2">
    <location>
        <begin position="91"/>
        <end position="97"/>
    </location>
</feature>
<feature type="transmembrane region" description="Helical" evidence="2">
    <location>
        <begin position="98"/>
        <end position="118"/>
    </location>
</feature>
<feature type="topological domain" description="Cytoplasmic" evidence="2">
    <location>
        <begin position="119"/>
        <end position="129"/>
    </location>
</feature>
<feature type="transmembrane region" description="Helical" evidence="2">
    <location>
        <begin position="130"/>
        <end position="150"/>
    </location>
</feature>
<feature type="topological domain" description="Extracellular" evidence="2">
    <location>
        <begin position="151"/>
        <end position="165"/>
    </location>
</feature>
<feature type="transmembrane region" description="Helical" evidence="2">
    <location>
        <begin position="166"/>
        <end position="186"/>
    </location>
</feature>
<feature type="topological domain" description="Cytoplasmic" evidence="2">
    <location>
        <begin position="187"/>
        <end position="197"/>
    </location>
</feature>
<feature type="transmembrane region" description="Helical" evidence="2">
    <location>
        <begin position="198"/>
        <end position="218"/>
    </location>
</feature>
<feature type="topological domain" description="Extracellular" evidence="2">
    <location>
        <begin position="219"/>
        <end position="231"/>
    </location>
</feature>
<feature type="transmembrane region" description="Helical" evidence="2">
    <location>
        <begin position="232"/>
        <end position="252"/>
    </location>
</feature>
<feature type="topological domain" description="Cytoplasmic" evidence="2">
    <location>
        <begin position="253"/>
        <end position="286"/>
    </location>
</feature>
<feature type="transmembrane region" description="Helical" evidence="2">
    <location>
        <begin position="287"/>
        <end position="307"/>
    </location>
</feature>
<feature type="topological domain" description="Extracellular" evidence="2">
    <location>
        <begin position="308"/>
        <end position="311"/>
    </location>
</feature>
<feature type="transmembrane region" description="Helical" evidence="2">
    <location>
        <begin position="312"/>
        <end position="332"/>
    </location>
</feature>
<feature type="topological domain" description="Cytoplasmic" evidence="2">
    <location>
        <begin position="333"/>
        <end position="354"/>
    </location>
</feature>
<feature type="transmembrane region" description="Helical" evidence="2">
    <location>
        <begin position="355"/>
        <end position="375"/>
    </location>
</feature>
<feature type="topological domain" description="Extracellular" evidence="2">
    <location>
        <begin position="376"/>
        <end position="384"/>
    </location>
</feature>
<feature type="transmembrane region" description="Helical" evidence="2">
    <location>
        <begin position="385"/>
        <end position="405"/>
    </location>
</feature>
<feature type="topological domain" description="Cytoplasmic" evidence="2">
    <location>
        <begin position="406"/>
        <end position="412"/>
    </location>
</feature>
<feature type="transmembrane region" description="Helical" evidence="2">
    <location>
        <begin position="413"/>
        <end position="433"/>
    </location>
</feature>
<feature type="topological domain" description="Extracellular" evidence="2">
    <location>
        <begin position="434"/>
        <end position="441"/>
    </location>
</feature>
<feature type="region of interest" description="Cation selection" evidence="2">
    <location>
        <begin position="139"/>
        <end position="174"/>
    </location>
</feature>
<feature type="region of interest" description="Cation selection" evidence="2">
    <location>
        <begin position="333"/>
        <end position="368"/>
    </location>
</feature>
<feature type="lipid moiety-binding region" description="N-myristoyl glycine" evidence="2">
    <location>
        <position position="2"/>
    </location>
</feature>
<feature type="lipid moiety-binding region" description="S-palmitoyl cysteine" evidence="2">
    <location>
        <position position="3"/>
    </location>
</feature>
<feature type="lipid moiety-binding region" description="S-palmitoyl cysteine" evidence="2">
    <location>
        <position position="4"/>
    </location>
</feature>
<comment type="function">
    <text evidence="1">Vacuolar cation/proton exchanger (CAX). Translocates Ca(2+) and other metal ions into vacuoles using the proton gradient formed by H(+)-ATPase and H(+)-pyrophosphatase (By similarity).</text>
</comment>
<comment type="subcellular location">
    <subcellularLocation>
        <location evidence="3">Vacuole membrane</location>
        <topology evidence="3">Multi-pass membrane protein</topology>
    </subcellularLocation>
    <subcellularLocation>
        <location evidence="3">Vacuole membrane</location>
        <topology evidence="3">Lipid-anchor</topology>
    </subcellularLocation>
    <text>Tonoplast.</text>
</comment>
<comment type="similarity">
    <text evidence="3">Belongs to the Ca(2+):cation antiporter (CaCA) (TC 2.A.19) family. Cation/proton exchanger (CAX) subfamily.</text>
</comment>
<comment type="sequence caution" evidence="3">
    <conflict type="erroneous gene model prediction">
        <sequence resource="EMBL-CDS" id="AAF79504"/>
    </conflict>
    <text>The predicted gene has been split into 2 genes: At1g55730 and At1g55740.</text>
</comment>
<accession>Q8L783</accession>
<accession>Q9LFZ7</accession>
<name>CAX5_ARATH</name>
<proteinExistence type="evidence at transcript level"/>
<reference key="1">
    <citation type="journal article" date="2000" name="Nature">
        <title>Sequence and analysis of chromosome 1 of the plant Arabidopsis thaliana.</title>
        <authorList>
            <person name="Theologis A."/>
            <person name="Ecker J.R."/>
            <person name="Palm C.J."/>
            <person name="Federspiel N.A."/>
            <person name="Kaul S."/>
            <person name="White O."/>
            <person name="Alonso J."/>
            <person name="Altafi H."/>
            <person name="Araujo R."/>
            <person name="Bowman C.L."/>
            <person name="Brooks S.Y."/>
            <person name="Buehler E."/>
            <person name="Chan A."/>
            <person name="Chao Q."/>
            <person name="Chen H."/>
            <person name="Cheuk R.F."/>
            <person name="Chin C.W."/>
            <person name="Chung M.K."/>
            <person name="Conn L."/>
            <person name="Conway A.B."/>
            <person name="Conway A.R."/>
            <person name="Creasy T.H."/>
            <person name="Dewar K."/>
            <person name="Dunn P."/>
            <person name="Etgu P."/>
            <person name="Feldblyum T.V."/>
            <person name="Feng J.-D."/>
            <person name="Fong B."/>
            <person name="Fujii C.Y."/>
            <person name="Gill J.E."/>
            <person name="Goldsmith A.D."/>
            <person name="Haas B."/>
            <person name="Hansen N.F."/>
            <person name="Hughes B."/>
            <person name="Huizar L."/>
            <person name="Hunter J.L."/>
            <person name="Jenkins J."/>
            <person name="Johnson-Hopson C."/>
            <person name="Khan S."/>
            <person name="Khaykin E."/>
            <person name="Kim C.J."/>
            <person name="Koo H.L."/>
            <person name="Kremenetskaia I."/>
            <person name="Kurtz D.B."/>
            <person name="Kwan A."/>
            <person name="Lam B."/>
            <person name="Langin-Hooper S."/>
            <person name="Lee A."/>
            <person name="Lee J.M."/>
            <person name="Lenz C.A."/>
            <person name="Li J.H."/>
            <person name="Li Y.-P."/>
            <person name="Lin X."/>
            <person name="Liu S.X."/>
            <person name="Liu Z.A."/>
            <person name="Luros J.S."/>
            <person name="Maiti R."/>
            <person name="Marziali A."/>
            <person name="Militscher J."/>
            <person name="Miranda M."/>
            <person name="Nguyen M."/>
            <person name="Nierman W.C."/>
            <person name="Osborne B.I."/>
            <person name="Pai G."/>
            <person name="Peterson J."/>
            <person name="Pham P.K."/>
            <person name="Rizzo M."/>
            <person name="Rooney T."/>
            <person name="Rowley D."/>
            <person name="Sakano H."/>
            <person name="Salzberg S.L."/>
            <person name="Schwartz J.R."/>
            <person name="Shinn P."/>
            <person name="Southwick A.M."/>
            <person name="Sun H."/>
            <person name="Tallon L.J."/>
            <person name="Tambunga G."/>
            <person name="Toriumi M.J."/>
            <person name="Town C.D."/>
            <person name="Utterback T."/>
            <person name="Van Aken S."/>
            <person name="Vaysberg M."/>
            <person name="Vysotskaia V.S."/>
            <person name="Walker M."/>
            <person name="Wu D."/>
            <person name="Yu G."/>
            <person name="Fraser C.M."/>
            <person name="Venter J.C."/>
            <person name="Davis R.W."/>
        </authorList>
    </citation>
    <scope>NUCLEOTIDE SEQUENCE [LARGE SCALE GENOMIC DNA]</scope>
    <source>
        <strain>cv. Columbia</strain>
    </source>
</reference>
<reference key="2">
    <citation type="journal article" date="2017" name="Plant J.">
        <title>Araport11: a complete reannotation of the Arabidopsis thaliana reference genome.</title>
        <authorList>
            <person name="Cheng C.Y."/>
            <person name="Krishnakumar V."/>
            <person name="Chan A.P."/>
            <person name="Thibaud-Nissen F."/>
            <person name="Schobel S."/>
            <person name="Town C.D."/>
        </authorList>
    </citation>
    <scope>GENOME REANNOTATION</scope>
    <source>
        <strain>cv. Columbia</strain>
    </source>
</reference>
<reference key="3">
    <citation type="journal article" date="2003" name="Science">
        <title>Empirical analysis of transcriptional activity in the Arabidopsis genome.</title>
        <authorList>
            <person name="Yamada K."/>
            <person name="Lim J."/>
            <person name="Dale J.M."/>
            <person name="Chen H."/>
            <person name="Shinn P."/>
            <person name="Palm C.J."/>
            <person name="Southwick A.M."/>
            <person name="Wu H.C."/>
            <person name="Kim C.J."/>
            <person name="Nguyen M."/>
            <person name="Pham P.K."/>
            <person name="Cheuk R.F."/>
            <person name="Karlin-Newmann G."/>
            <person name="Liu S.X."/>
            <person name="Lam B."/>
            <person name="Sakano H."/>
            <person name="Wu T."/>
            <person name="Yu G."/>
            <person name="Miranda M."/>
            <person name="Quach H.L."/>
            <person name="Tripp M."/>
            <person name="Chang C.H."/>
            <person name="Lee J.M."/>
            <person name="Toriumi M.J."/>
            <person name="Chan M.M."/>
            <person name="Tang C.C."/>
            <person name="Onodera C.S."/>
            <person name="Deng J.M."/>
            <person name="Akiyama K."/>
            <person name="Ansari Y."/>
            <person name="Arakawa T."/>
            <person name="Banh J."/>
            <person name="Banno F."/>
            <person name="Bowser L."/>
            <person name="Brooks S.Y."/>
            <person name="Carninci P."/>
            <person name="Chao Q."/>
            <person name="Choy N."/>
            <person name="Enju A."/>
            <person name="Goldsmith A.D."/>
            <person name="Gurjal M."/>
            <person name="Hansen N.F."/>
            <person name="Hayashizaki Y."/>
            <person name="Johnson-Hopson C."/>
            <person name="Hsuan V.W."/>
            <person name="Iida K."/>
            <person name="Karnes M."/>
            <person name="Khan S."/>
            <person name="Koesema E."/>
            <person name="Ishida J."/>
            <person name="Jiang P.X."/>
            <person name="Jones T."/>
            <person name="Kawai J."/>
            <person name="Kamiya A."/>
            <person name="Meyers C."/>
            <person name="Nakajima M."/>
            <person name="Narusaka M."/>
            <person name="Seki M."/>
            <person name="Sakurai T."/>
            <person name="Satou M."/>
            <person name="Tamse R."/>
            <person name="Vaysberg M."/>
            <person name="Wallender E.K."/>
            <person name="Wong C."/>
            <person name="Yamamura Y."/>
            <person name="Yuan S."/>
            <person name="Shinozaki K."/>
            <person name="Davis R.W."/>
            <person name="Theologis A."/>
            <person name="Ecker J.R."/>
        </authorList>
    </citation>
    <scope>NUCLEOTIDE SEQUENCE [LARGE SCALE MRNA]</scope>
    <source>
        <strain>cv. Columbia</strain>
    </source>
</reference>
<reference key="4">
    <citation type="journal article" date="2001" name="Plant Physiol.">
        <title>Phylogenetic relationships within cation transporter families of Arabidopsis.</title>
        <authorList>
            <person name="Maeser P."/>
            <person name="Thomine S."/>
            <person name="Schroeder J.I."/>
            <person name="Ward J.M."/>
            <person name="Hirschi K."/>
            <person name="Sze H."/>
            <person name="Talke I.N."/>
            <person name="Amtmann A."/>
            <person name="Maathuis F.J.M."/>
            <person name="Sanders D."/>
            <person name="Harper J.F."/>
            <person name="Tchieu J."/>
            <person name="Gribskov M."/>
            <person name="Persans M.W."/>
            <person name="Salt D.E."/>
            <person name="Kim S.A."/>
            <person name="Guerinot M.L."/>
        </authorList>
    </citation>
    <scope>GENE FAMILY</scope>
    <scope>NOMENCLATURE</scope>
</reference>
<gene>
    <name type="primary">CAX5</name>
    <name type="ordered locus">At1g55730</name>
    <name type="ORF">F20N2.14</name>
    <name type="ORF">F20N2.16</name>
    <name type="ORF">F20N2.30</name>
</gene>
<dbReference type="EMBL" id="AC002328">
    <property type="protein sequence ID" value="AAF79504.1"/>
    <property type="status" value="ALT_SEQ"/>
    <property type="molecule type" value="Genomic_DNA"/>
</dbReference>
<dbReference type="EMBL" id="CP002684">
    <property type="protein sequence ID" value="AEE33290.1"/>
    <property type="molecule type" value="Genomic_DNA"/>
</dbReference>
<dbReference type="EMBL" id="CP002684">
    <property type="protein sequence ID" value="AEE33291.1"/>
    <property type="molecule type" value="Genomic_DNA"/>
</dbReference>
<dbReference type="EMBL" id="AY136416">
    <property type="protein sequence ID" value="AAM97082.1"/>
    <property type="molecule type" value="mRNA"/>
</dbReference>
<dbReference type="EMBL" id="BT006591">
    <property type="protein sequence ID" value="AAP31935.1"/>
    <property type="molecule type" value="mRNA"/>
</dbReference>
<dbReference type="PIR" id="C96599">
    <property type="entry name" value="C96599"/>
</dbReference>
<dbReference type="RefSeq" id="NP_001031196.1">
    <property type="nucleotide sequence ID" value="NM_001036119.2"/>
</dbReference>
<dbReference type="RefSeq" id="NP_175969.2">
    <property type="nucleotide sequence ID" value="NM_104449.3"/>
</dbReference>
<dbReference type="SMR" id="Q8L783"/>
<dbReference type="BioGRID" id="27247">
    <property type="interactions" value="1"/>
</dbReference>
<dbReference type="FunCoup" id="Q8L783">
    <property type="interactions" value="524"/>
</dbReference>
<dbReference type="STRING" id="3702.Q8L783"/>
<dbReference type="CAZy" id="GH36">
    <property type="family name" value="Glycoside Hydrolase Family 36"/>
</dbReference>
<dbReference type="iPTMnet" id="Q8L783"/>
<dbReference type="PaxDb" id="3702-AT1G55730.1"/>
<dbReference type="ProteomicsDB" id="223953"/>
<dbReference type="EnsemblPlants" id="AT1G55730.1">
    <property type="protein sequence ID" value="AT1G55730.1"/>
    <property type="gene ID" value="AT1G55730"/>
</dbReference>
<dbReference type="EnsemblPlants" id="AT1G55730.2">
    <property type="protein sequence ID" value="AT1G55730.2"/>
    <property type="gene ID" value="AT1G55730"/>
</dbReference>
<dbReference type="GeneID" id="842022"/>
<dbReference type="Gramene" id="AT1G55730.1">
    <property type="protein sequence ID" value="AT1G55730.1"/>
    <property type="gene ID" value="AT1G55730"/>
</dbReference>
<dbReference type="Gramene" id="AT1G55730.2">
    <property type="protein sequence ID" value="AT1G55730.2"/>
    <property type="gene ID" value="AT1G55730"/>
</dbReference>
<dbReference type="KEGG" id="ath:AT1G55730"/>
<dbReference type="Araport" id="AT1G55730"/>
<dbReference type="TAIR" id="AT1G55730">
    <property type="gene designation" value="CAX5"/>
</dbReference>
<dbReference type="eggNOG" id="KOG1397">
    <property type="taxonomic scope" value="Eukaryota"/>
</dbReference>
<dbReference type="HOGENOM" id="CLU_008721_2_1_1"/>
<dbReference type="InParanoid" id="Q8L783"/>
<dbReference type="OMA" id="ISVHTMG"/>
<dbReference type="PhylomeDB" id="Q8L783"/>
<dbReference type="PRO" id="PR:Q8L783"/>
<dbReference type="Proteomes" id="UP000006548">
    <property type="component" value="Chromosome 1"/>
</dbReference>
<dbReference type="ExpressionAtlas" id="Q8L783">
    <property type="expression patterns" value="baseline and differential"/>
</dbReference>
<dbReference type="GO" id="GO:0005774">
    <property type="term" value="C:vacuolar membrane"/>
    <property type="evidence" value="ECO:0007669"/>
    <property type="project" value="UniProtKB-SubCell"/>
</dbReference>
<dbReference type="GO" id="GO:0015369">
    <property type="term" value="F:calcium:proton antiporter activity"/>
    <property type="evidence" value="ECO:0007669"/>
    <property type="project" value="InterPro"/>
</dbReference>
<dbReference type="FunFam" id="1.20.1420.30:FF:000008">
    <property type="entry name" value="Vacuolar cation/proton exchanger"/>
    <property type="match status" value="1"/>
</dbReference>
<dbReference type="FunFam" id="1.20.1420.30:FF:000012">
    <property type="entry name" value="Vacuolar cation/proton exchanger"/>
    <property type="match status" value="1"/>
</dbReference>
<dbReference type="Gene3D" id="1.20.1420.30">
    <property type="entry name" value="NCX, central ion-binding region"/>
    <property type="match status" value="2"/>
</dbReference>
<dbReference type="InterPro" id="IPR004713">
    <property type="entry name" value="CaH_exchang"/>
</dbReference>
<dbReference type="InterPro" id="IPR004798">
    <property type="entry name" value="CAX-like"/>
</dbReference>
<dbReference type="InterPro" id="IPR004837">
    <property type="entry name" value="NaCa_Exmemb"/>
</dbReference>
<dbReference type="InterPro" id="IPR044880">
    <property type="entry name" value="NCX_ion-bd_dom_sf"/>
</dbReference>
<dbReference type="NCBIfam" id="TIGR00846">
    <property type="entry name" value="caca2"/>
    <property type="match status" value="1"/>
</dbReference>
<dbReference type="NCBIfam" id="TIGR00378">
    <property type="entry name" value="cax"/>
    <property type="match status" value="1"/>
</dbReference>
<dbReference type="PANTHER" id="PTHR31503">
    <property type="entry name" value="VACUOLAR CALCIUM ION TRANSPORTER"/>
    <property type="match status" value="1"/>
</dbReference>
<dbReference type="PANTHER" id="PTHR31503:SF90">
    <property type="entry name" value="VACUOLAR CATION_PROTON EXCHANGER 5-RELATED"/>
    <property type="match status" value="1"/>
</dbReference>
<dbReference type="Pfam" id="PF01699">
    <property type="entry name" value="Na_Ca_ex"/>
    <property type="match status" value="2"/>
</dbReference>
<organism>
    <name type="scientific">Arabidopsis thaliana</name>
    <name type="common">Mouse-ear cress</name>
    <dbReference type="NCBI Taxonomy" id="3702"/>
    <lineage>
        <taxon>Eukaryota</taxon>
        <taxon>Viridiplantae</taxon>
        <taxon>Streptophyta</taxon>
        <taxon>Embryophyta</taxon>
        <taxon>Tracheophyta</taxon>
        <taxon>Spermatophyta</taxon>
        <taxon>Magnoliopsida</taxon>
        <taxon>eudicotyledons</taxon>
        <taxon>Gunneridae</taxon>
        <taxon>Pentapetalae</taxon>
        <taxon>rosids</taxon>
        <taxon>malvids</taxon>
        <taxon>Brassicales</taxon>
        <taxon>Brassicaceae</taxon>
        <taxon>Camelineae</taxon>
        <taxon>Arabidopsis</taxon>
    </lineage>
</organism>
<keyword id="KW-0050">Antiport</keyword>
<keyword id="KW-0106">Calcium</keyword>
<keyword id="KW-0109">Calcium transport</keyword>
<keyword id="KW-0406">Ion transport</keyword>
<keyword id="KW-0449">Lipoprotein</keyword>
<keyword id="KW-0472">Membrane</keyword>
<keyword id="KW-0519">Myristate</keyword>
<keyword id="KW-0564">Palmitate</keyword>
<keyword id="KW-1185">Reference proteome</keyword>
<keyword id="KW-0812">Transmembrane</keyword>
<keyword id="KW-1133">Transmembrane helix</keyword>
<keyword id="KW-0813">Transport</keyword>
<keyword id="KW-0926">Vacuole</keyword>